<keyword id="KW-0067">ATP-binding</keyword>
<keyword id="KW-0997">Cell inner membrane</keyword>
<keyword id="KW-1003">Cell membrane</keyword>
<keyword id="KW-0472">Membrane</keyword>
<keyword id="KW-0547">Nucleotide-binding</keyword>
<keyword id="KW-0571">Peptide transport</keyword>
<keyword id="KW-0653">Protein transport</keyword>
<keyword id="KW-1185">Reference proteome</keyword>
<keyword id="KW-1278">Translocase</keyword>
<keyword id="KW-0813">Transport</keyword>
<organism>
    <name type="scientific">Brucella abortus (strain 2308)</name>
    <dbReference type="NCBI Taxonomy" id="359391"/>
    <lineage>
        <taxon>Bacteria</taxon>
        <taxon>Pseudomonadati</taxon>
        <taxon>Pseudomonadota</taxon>
        <taxon>Alphaproteobacteria</taxon>
        <taxon>Hyphomicrobiales</taxon>
        <taxon>Brucellaceae</taxon>
        <taxon>Brucella/Ochrobactrum group</taxon>
        <taxon>Brucella</taxon>
    </lineage>
</organism>
<name>Y1052_BRUA2</name>
<gene>
    <name type="ordered locus">BAB2_1052</name>
</gene>
<comment type="function">
    <text evidence="1">Probably part of an ABC transporter complex that could be involved in peptide import. Probably responsible for energy coupling to the transport system (By similarity).</text>
</comment>
<comment type="subunit">
    <text evidence="3">The complex is composed of two ATP-binding proteins (BAB2_1052 and BAB2_1053), two transmembrane proteins (BAB2_1050 and BAB2_1051) and a solute-binding protein (BAB2_1049).</text>
</comment>
<comment type="subcellular location">
    <subcellularLocation>
        <location evidence="3">Cell inner membrane</location>
        <topology evidence="3">Peripheral membrane protein</topology>
    </subcellularLocation>
</comment>
<comment type="similarity">
    <text evidence="3">Belongs to the ABC transporter superfamily.</text>
</comment>
<feature type="chain" id="PRO_0000290154" description="Putative peptide import ATP-binding protein BAB2_1052">
    <location>
        <begin position="1"/>
        <end position="332"/>
    </location>
</feature>
<feature type="domain" description="ABC transporter" evidence="2">
    <location>
        <begin position="11"/>
        <end position="261"/>
    </location>
</feature>
<feature type="binding site" evidence="2">
    <location>
        <begin position="47"/>
        <end position="54"/>
    </location>
    <ligand>
        <name>ATP</name>
        <dbReference type="ChEBI" id="CHEBI:30616"/>
    </ligand>
</feature>
<accession>Q2YJJ9</accession>
<dbReference type="EC" id="7.4.2.-"/>
<dbReference type="EMBL" id="AM040265">
    <property type="protein sequence ID" value="CAJ13218.1"/>
    <property type="molecule type" value="Genomic_DNA"/>
</dbReference>
<dbReference type="RefSeq" id="WP_002965564.1">
    <property type="nucleotide sequence ID" value="NZ_KN046823.1"/>
</dbReference>
<dbReference type="SMR" id="Q2YJJ9"/>
<dbReference type="STRING" id="359391.BAB2_1052"/>
<dbReference type="KEGG" id="bmf:BAB2_1052"/>
<dbReference type="PATRIC" id="fig|359391.11.peg.1839"/>
<dbReference type="HOGENOM" id="CLU_000604_1_23_5"/>
<dbReference type="PhylomeDB" id="Q2YJJ9"/>
<dbReference type="Proteomes" id="UP000002719">
    <property type="component" value="Chromosome II"/>
</dbReference>
<dbReference type="GO" id="GO:0005886">
    <property type="term" value="C:plasma membrane"/>
    <property type="evidence" value="ECO:0007669"/>
    <property type="project" value="UniProtKB-SubCell"/>
</dbReference>
<dbReference type="GO" id="GO:0005524">
    <property type="term" value="F:ATP binding"/>
    <property type="evidence" value="ECO:0007669"/>
    <property type="project" value="UniProtKB-KW"/>
</dbReference>
<dbReference type="GO" id="GO:0016887">
    <property type="term" value="F:ATP hydrolysis activity"/>
    <property type="evidence" value="ECO:0007669"/>
    <property type="project" value="InterPro"/>
</dbReference>
<dbReference type="GO" id="GO:0015833">
    <property type="term" value="P:peptide transport"/>
    <property type="evidence" value="ECO:0007669"/>
    <property type="project" value="UniProtKB-KW"/>
</dbReference>
<dbReference type="GO" id="GO:0015031">
    <property type="term" value="P:protein transport"/>
    <property type="evidence" value="ECO:0007669"/>
    <property type="project" value="UniProtKB-KW"/>
</dbReference>
<dbReference type="CDD" id="cd03257">
    <property type="entry name" value="ABC_NikE_OppD_transporters"/>
    <property type="match status" value="1"/>
</dbReference>
<dbReference type="FunFam" id="3.40.50.300:FF:000016">
    <property type="entry name" value="Oligopeptide ABC transporter ATP-binding component"/>
    <property type="match status" value="1"/>
</dbReference>
<dbReference type="Gene3D" id="3.40.50.300">
    <property type="entry name" value="P-loop containing nucleotide triphosphate hydrolases"/>
    <property type="match status" value="1"/>
</dbReference>
<dbReference type="InterPro" id="IPR003593">
    <property type="entry name" value="AAA+_ATPase"/>
</dbReference>
<dbReference type="InterPro" id="IPR050388">
    <property type="entry name" value="ABC_Ni/Peptide_Import"/>
</dbReference>
<dbReference type="InterPro" id="IPR003439">
    <property type="entry name" value="ABC_transporter-like_ATP-bd"/>
</dbReference>
<dbReference type="InterPro" id="IPR017871">
    <property type="entry name" value="ABC_transporter-like_CS"/>
</dbReference>
<dbReference type="InterPro" id="IPR013563">
    <property type="entry name" value="Oligopep_ABC_C"/>
</dbReference>
<dbReference type="InterPro" id="IPR027417">
    <property type="entry name" value="P-loop_NTPase"/>
</dbReference>
<dbReference type="NCBIfam" id="TIGR01727">
    <property type="entry name" value="oligo_HPY"/>
    <property type="match status" value="1"/>
</dbReference>
<dbReference type="PANTHER" id="PTHR43297:SF2">
    <property type="entry name" value="DIPEPTIDE TRANSPORT ATP-BINDING PROTEIN DPPD"/>
    <property type="match status" value="1"/>
</dbReference>
<dbReference type="PANTHER" id="PTHR43297">
    <property type="entry name" value="OLIGOPEPTIDE TRANSPORT ATP-BINDING PROTEIN APPD"/>
    <property type="match status" value="1"/>
</dbReference>
<dbReference type="Pfam" id="PF00005">
    <property type="entry name" value="ABC_tran"/>
    <property type="match status" value="1"/>
</dbReference>
<dbReference type="Pfam" id="PF08352">
    <property type="entry name" value="oligo_HPY"/>
    <property type="match status" value="1"/>
</dbReference>
<dbReference type="SMART" id="SM00382">
    <property type="entry name" value="AAA"/>
    <property type="match status" value="1"/>
</dbReference>
<dbReference type="SUPFAM" id="SSF52540">
    <property type="entry name" value="P-loop containing nucleoside triphosphate hydrolases"/>
    <property type="match status" value="1"/>
</dbReference>
<dbReference type="PROSITE" id="PS00211">
    <property type="entry name" value="ABC_TRANSPORTER_1"/>
    <property type="match status" value="1"/>
</dbReference>
<dbReference type="PROSITE" id="PS50893">
    <property type="entry name" value="ABC_TRANSPORTER_2"/>
    <property type="match status" value="1"/>
</dbReference>
<protein>
    <recommendedName>
        <fullName>Putative peptide import ATP-binding protein BAB2_1052</fullName>
        <ecNumber>7.4.2.-</ecNumber>
    </recommendedName>
</protein>
<evidence type="ECO:0000250" key="1"/>
<evidence type="ECO:0000255" key="2">
    <source>
        <dbReference type="PROSITE-ProRule" id="PRU00434"/>
    </source>
</evidence>
<evidence type="ECO:0000305" key="3"/>
<sequence>MTISLKTAPLLEVSNLSVDFRTDGGWINAVDDVNFTLAPRETLGLVGESGSGKSVTALSLLRLHDQRNSRLGGSVRYKGEDLFTLATSRLRQIRGHEIAMVFQDPIHTLNPVLTIGRQIEEGLRLHHGLQGREARKRAIELLDRVRIPDAARRIDEYPHRMSGGQRQRVMIAIAIAGDPKILIADEPTTALDVTVQAQIMELLRNLRDELSMSVILISHDLGLVSEFADRAMVMYAGQPVETGPIDKIFDEPLHPYTEGLLSAIPDLDDDLDRLPTIPGSIPEPSRRPPGCRFAPRCTFAQASCVKPQPIMSLTGGRASRCPPRLPTEECVL</sequence>
<proteinExistence type="inferred from homology"/>
<reference key="1">
    <citation type="journal article" date="2005" name="Infect. Immun.">
        <title>Whole-genome analyses of speciation events in pathogenic Brucellae.</title>
        <authorList>
            <person name="Chain P.S."/>
            <person name="Comerci D.J."/>
            <person name="Tolmasky M.E."/>
            <person name="Larimer F.W."/>
            <person name="Malfatti S.A."/>
            <person name="Vergez L.M."/>
            <person name="Aguero F."/>
            <person name="Land M.L."/>
            <person name="Ugalde R.A."/>
            <person name="Garcia E."/>
        </authorList>
    </citation>
    <scope>NUCLEOTIDE SEQUENCE [LARGE SCALE GENOMIC DNA]</scope>
    <source>
        <strain>2308</strain>
    </source>
</reference>